<organism>
    <name type="scientific">Nautilia profundicola (strain ATCC BAA-1463 / DSM 18972 / AmH)</name>
    <dbReference type="NCBI Taxonomy" id="598659"/>
    <lineage>
        <taxon>Bacteria</taxon>
        <taxon>Pseudomonadati</taxon>
        <taxon>Campylobacterota</taxon>
        <taxon>Epsilonproteobacteria</taxon>
        <taxon>Nautiliales</taxon>
        <taxon>Nautiliaceae</taxon>
        <taxon>Nautilia</taxon>
    </lineage>
</organism>
<proteinExistence type="inferred from homology"/>
<protein>
    <recommendedName>
        <fullName evidence="1">Large ribosomal subunit protein bL27</fullName>
    </recommendedName>
    <alternativeName>
        <fullName evidence="3">50S ribosomal protein L27</fullName>
    </alternativeName>
</protein>
<name>RL27_NAUPA</name>
<feature type="chain" id="PRO_1000195879" description="Large ribosomal subunit protein bL27">
    <location>
        <begin position="1"/>
        <end position="87"/>
    </location>
</feature>
<feature type="region of interest" description="Disordered" evidence="2">
    <location>
        <begin position="1"/>
        <end position="21"/>
    </location>
</feature>
<dbReference type="EMBL" id="CP001279">
    <property type="protein sequence ID" value="ACM93503.1"/>
    <property type="molecule type" value="Genomic_DNA"/>
</dbReference>
<dbReference type="RefSeq" id="WP_015902555.1">
    <property type="nucleotide sequence ID" value="NC_012115.1"/>
</dbReference>
<dbReference type="SMR" id="B9L606"/>
<dbReference type="STRING" id="598659.NAMH_1402"/>
<dbReference type="KEGG" id="nam:NAMH_1402"/>
<dbReference type="eggNOG" id="COG0211">
    <property type="taxonomic scope" value="Bacteria"/>
</dbReference>
<dbReference type="HOGENOM" id="CLU_095424_4_0_7"/>
<dbReference type="OrthoDB" id="9803474at2"/>
<dbReference type="Proteomes" id="UP000000448">
    <property type="component" value="Chromosome"/>
</dbReference>
<dbReference type="GO" id="GO:0022625">
    <property type="term" value="C:cytosolic large ribosomal subunit"/>
    <property type="evidence" value="ECO:0007669"/>
    <property type="project" value="TreeGrafter"/>
</dbReference>
<dbReference type="GO" id="GO:0003735">
    <property type="term" value="F:structural constituent of ribosome"/>
    <property type="evidence" value="ECO:0007669"/>
    <property type="project" value="InterPro"/>
</dbReference>
<dbReference type="GO" id="GO:0006412">
    <property type="term" value="P:translation"/>
    <property type="evidence" value="ECO:0007669"/>
    <property type="project" value="UniProtKB-UniRule"/>
</dbReference>
<dbReference type="FunFam" id="2.40.50.100:FF:000026">
    <property type="entry name" value="50S ribosomal protein L27"/>
    <property type="match status" value="1"/>
</dbReference>
<dbReference type="Gene3D" id="2.40.50.100">
    <property type="match status" value="1"/>
</dbReference>
<dbReference type="HAMAP" id="MF_00539">
    <property type="entry name" value="Ribosomal_bL27"/>
    <property type="match status" value="1"/>
</dbReference>
<dbReference type="InterPro" id="IPR001684">
    <property type="entry name" value="Ribosomal_bL27"/>
</dbReference>
<dbReference type="InterPro" id="IPR018261">
    <property type="entry name" value="Ribosomal_bL27_CS"/>
</dbReference>
<dbReference type="NCBIfam" id="TIGR00062">
    <property type="entry name" value="L27"/>
    <property type="match status" value="1"/>
</dbReference>
<dbReference type="PANTHER" id="PTHR15893:SF0">
    <property type="entry name" value="LARGE RIBOSOMAL SUBUNIT PROTEIN BL27M"/>
    <property type="match status" value="1"/>
</dbReference>
<dbReference type="PANTHER" id="PTHR15893">
    <property type="entry name" value="RIBOSOMAL PROTEIN L27"/>
    <property type="match status" value="1"/>
</dbReference>
<dbReference type="Pfam" id="PF01016">
    <property type="entry name" value="Ribosomal_L27"/>
    <property type="match status" value="1"/>
</dbReference>
<dbReference type="PRINTS" id="PR00063">
    <property type="entry name" value="RIBOSOMALL27"/>
</dbReference>
<dbReference type="SUPFAM" id="SSF110324">
    <property type="entry name" value="Ribosomal L27 protein-like"/>
    <property type="match status" value="1"/>
</dbReference>
<dbReference type="PROSITE" id="PS00831">
    <property type="entry name" value="RIBOSOMAL_L27"/>
    <property type="match status" value="1"/>
</dbReference>
<comment type="similarity">
    <text evidence="1">Belongs to the bacterial ribosomal protein bL27 family.</text>
</comment>
<reference key="1">
    <citation type="journal article" date="2009" name="PLoS Genet.">
        <title>Adaptations to submarine hydrothermal environments exemplified by the genome of Nautilia profundicola.</title>
        <authorList>
            <person name="Campbell B.J."/>
            <person name="Smith J.L."/>
            <person name="Hanson T.E."/>
            <person name="Klotz M.G."/>
            <person name="Stein L.Y."/>
            <person name="Lee C.K."/>
            <person name="Wu D."/>
            <person name="Robinson J.M."/>
            <person name="Khouri H.M."/>
            <person name="Eisen J.A."/>
            <person name="Cary S.C."/>
        </authorList>
    </citation>
    <scope>NUCLEOTIDE SEQUENCE [LARGE SCALE GENOMIC DNA]</scope>
    <source>
        <strain>ATCC BAA-1463 / DSM 18972 / AmH</strain>
    </source>
</reference>
<sequence>MAHKKGQGSTQNNRDSAGRRLGVKKFGGEFVRAGNIIIRQRGTKVHPGNNVGLGKDHTIYALIDGYVKFEIKDKQRKKVSVYPIENN</sequence>
<gene>
    <name evidence="1" type="primary">rpmA</name>
    <name type="ordered locus">NAMH_1402</name>
</gene>
<keyword id="KW-0687">Ribonucleoprotein</keyword>
<keyword id="KW-0689">Ribosomal protein</keyword>
<evidence type="ECO:0000255" key="1">
    <source>
        <dbReference type="HAMAP-Rule" id="MF_00539"/>
    </source>
</evidence>
<evidence type="ECO:0000256" key="2">
    <source>
        <dbReference type="SAM" id="MobiDB-lite"/>
    </source>
</evidence>
<evidence type="ECO:0000305" key="3"/>
<accession>B9L606</accession>